<organism>
    <name type="scientific">Bacillus cereus (strain Q1)</name>
    <dbReference type="NCBI Taxonomy" id="361100"/>
    <lineage>
        <taxon>Bacteria</taxon>
        <taxon>Bacillati</taxon>
        <taxon>Bacillota</taxon>
        <taxon>Bacilli</taxon>
        <taxon>Bacillales</taxon>
        <taxon>Bacillaceae</taxon>
        <taxon>Bacillus</taxon>
        <taxon>Bacillus cereus group</taxon>
    </lineage>
</organism>
<dbReference type="EC" id="6.3.2.1" evidence="1"/>
<dbReference type="EMBL" id="CP000227">
    <property type="protein sequence ID" value="ACM12037.1"/>
    <property type="molecule type" value="Genomic_DNA"/>
</dbReference>
<dbReference type="SMR" id="B9IVR2"/>
<dbReference type="KEGG" id="bcq:BCQ_1609"/>
<dbReference type="HOGENOM" id="CLU_047148_0_0_9"/>
<dbReference type="UniPathway" id="UPA00028">
    <property type="reaction ID" value="UER00005"/>
</dbReference>
<dbReference type="Proteomes" id="UP000000441">
    <property type="component" value="Chromosome"/>
</dbReference>
<dbReference type="GO" id="GO:0005829">
    <property type="term" value="C:cytosol"/>
    <property type="evidence" value="ECO:0007669"/>
    <property type="project" value="TreeGrafter"/>
</dbReference>
<dbReference type="GO" id="GO:0005524">
    <property type="term" value="F:ATP binding"/>
    <property type="evidence" value="ECO:0007669"/>
    <property type="project" value="UniProtKB-KW"/>
</dbReference>
<dbReference type="GO" id="GO:0004592">
    <property type="term" value="F:pantoate-beta-alanine ligase activity"/>
    <property type="evidence" value="ECO:0007669"/>
    <property type="project" value="UniProtKB-UniRule"/>
</dbReference>
<dbReference type="GO" id="GO:0015940">
    <property type="term" value="P:pantothenate biosynthetic process"/>
    <property type="evidence" value="ECO:0007669"/>
    <property type="project" value="UniProtKB-UniRule"/>
</dbReference>
<dbReference type="CDD" id="cd00560">
    <property type="entry name" value="PanC"/>
    <property type="match status" value="1"/>
</dbReference>
<dbReference type="FunFam" id="3.30.1300.10:FF:000001">
    <property type="entry name" value="Pantothenate synthetase"/>
    <property type="match status" value="1"/>
</dbReference>
<dbReference type="FunFam" id="3.40.50.620:FF:000013">
    <property type="entry name" value="Pantothenate synthetase"/>
    <property type="match status" value="1"/>
</dbReference>
<dbReference type="Gene3D" id="3.40.50.620">
    <property type="entry name" value="HUPs"/>
    <property type="match status" value="1"/>
</dbReference>
<dbReference type="Gene3D" id="3.30.1300.10">
    <property type="entry name" value="Pantoate-beta-alanine ligase, C-terminal domain"/>
    <property type="match status" value="1"/>
</dbReference>
<dbReference type="HAMAP" id="MF_00158">
    <property type="entry name" value="PanC"/>
    <property type="match status" value="1"/>
</dbReference>
<dbReference type="InterPro" id="IPR004821">
    <property type="entry name" value="Cyt_trans-like"/>
</dbReference>
<dbReference type="InterPro" id="IPR003721">
    <property type="entry name" value="Pantoate_ligase"/>
</dbReference>
<dbReference type="InterPro" id="IPR042176">
    <property type="entry name" value="Pantoate_ligase_C"/>
</dbReference>
<dbReference type="InterPro" id="IPR014729">
    <property type="entry name" value="Rossmann-like_a/b/a_fold"/>
</dbReference>
<dbReference type="NCBIfam" id="TIGR00125">
    <property type="entry name" value="cyt_tran_rel"/>
    <property type="match status" value="1"/>
</dbReference>
<dbReference type="NCBIfam" id="TIGR00018">
    <property type="entry name" value="panC"/>
    <property type="match status" value="1"/>
</dbReference>
<dbReference type="PANTHER" id="PTHR21299">
    <property type="entry name" value="CYTIDYLATE KINASE/PANTOATE-BETA-ALANINE LIGASE"/>
    <property type="match status" value="1"/>
</dbReference>
<dbReference type="PANTHER" id="PTHR21299:SF1">
    <property type="entry name" value="PANTOATE--BETA-ALANINE LIGASE"/>
    <property type="match status" value="1"/>
</dbReference>
<dbReference type="Pfam" id="PF02569">
    <property type="entry name" value="Pantoate_ligase"/>
    <property type="match status" value="1"/>
</dbReference>
<dbReference type="SUPFAM" id="SSF52374">
    <property type="entry name" value="Nucleotidylyl transferase"/>
    <property type="match status" value="1"/>
</dbReference>
<accession>B9IVR2</accession>
<protein>
    <recommendedName>
        <fullName evidence="1">Pantothenate synthetase</fullName>
        <shortName evidence="1">PS</shortName>
        <ecNumber evidence="1">6.3.2.1</ecNumber>
    </recommendedName>
    <alternativeName>
        <fullName evidence="1">Pantoate--beta-alanine ligase</fullName>
    </alternativeName>
    <alternativeName>
        <fullName evidence="1">Pantoate-activating enzyme</fullName>
    </alternativeName>
</protein>
<comment type="function">
    <text evidence="1">Catalyzes the condensation of pantoate with beta-alanine in an ATP-dependent reaction via a pantoyl-adenylate intermediate.</text>
</comment>
<comment type="catalytic activity">
    <reaction evidence="1">
        <text>(R)-pantoate + beta-alanine + ATP = (R)-pantothenate + AMP + diphosphate + H(+)</text>
        <dbReference type="Rhea" id="RHEA:10912"/>
        <dbReference type="ChEBI" id="CHEBI:15378"/>
        <dbReference type="ChEBI" id="CHEBI:15980"/>
        <dbReference type="ChEBI" id="CHEBI:29032"/>
        <dbReference type="ChEBI" id="CHEBI:30616"/>
        <dbReference type="ChEBI" id="CHEBI:33019"/>
        <dbReference type="ChEBI" id="CHEBI:57966"/>
        <dbReference type="ChEBI" id="CHEBI:456215"/>
        <dbReference type="EC" id="6.3.2.1"/>
    </reaction>
</comment>
<comment type="pathway">
    <text evidence="1">Cofactor biosynthesis; (R)-pantothenate biosynthesis; (R)-pantothenate from (R)-pantoate and beta-alanine: step 1/1.</text>
</comment>
<comment type="subunit">
    <text evidence="1">Homodimer.</text>
</comment>
<comment type="subcellular location">
    <subcellularLocation>
        <location evidence="1">Cytoplasm</location>
    </subcellularLocation>
</comment>
<comment type="miscellaneous">
    <text evidence="1">The reaction proceeds by a bi uni uni bi ping pong mechanism.</text>
</comment>
<comment type="similarity">
    <text evidence="1">Belongs to the pantothenate synthetase family.</text>
</comment>
<gene>
    <name evidence="1" type="primary">panC</name>
    <name type="ordered locus">BCQ_1609</name>
</gene>
<reference key="1">
    <citation type="journal article" date="2009" name="J. Bacteriol.">
        <title>Complete genome sequence of the extremophilic Bacillus cereus strain Q1 with industrial applications.</title>
        <authorList>
            <person name="Xiong Z."/>
            <person name="Jiang Y."/>
            <person name="Qi D."/>
            <person name="Lu H."/>
            <person name="Yang F."/>
            <person name="Yang J."/>
            <person name="Chen L."/>
            <person name="Sun L."/>
            <person name="Xu X."/>
            <person name="Xue Y."/>
            <person name="Zhu Y."/>
            <person name="Jin Q."/>
        </authorList>
    </citation>
    <scope>NUCLEOTIDE SEQUENCE [LARGE SCALE GENOMIC DNA]</scope>
    <source>
        <strain>Q1</strain>
    </source>
</reference>
<name>PANC_BACCQ</name>
<evidence type="ECO:0000255" key="1">
    <source>
        <dbReference type="HAMAP-Rule" id="MF_00158"/>
    </source>
</evidence>
<keyword id="KW-0067">ATP-binding</keyword>
<keyword id="KW-0963">Cytoplasm</keyword>
<keyword id="KW-0436">Ligase</keyword>
<keyword id="KW-0547">Nucleotide-binding</keyword>
<keyword id="KW-0566">Pantothenate biosynthesis</keyword>
<proteinExistence type="inferred from homology"/>
<feature type="chain" id="PRO_1000123401" description="Pantothenate synthetase">
    <location>
        <begin position="1"/>
        <end position="282"/>
    </location>
</feature>
<feature type="active site" description="Proton donor" evidence="1">
    <location>
        <position position="37"/>
    </location>
</feature>
<feature type="binding site" evidence="1">
    <location>
        <begin position="30"/>
        <end position="37"/>
    </location>
    <ligand>
        <name>ATP</name>
        <dbReference type="ChEBI" id="CHEBI:30616"/>
    </ligand>
</feature>
<feature type="binding site" evidence="1">
    <location>
        <position position="61"/>
    </location>
    <ligand>
        <name>(R)-pantoate</name>
        <dbReference type="ChEBI" id="CHEBI:15980"/>
    </ligand>
</feature>
<feature type="binding site" evidence="1">
    <location>
        <position position="61"/>
    </location>
    <ligand>
        <name>beta-alanine</name>
        <dbReference type="ChEBI" id="CHEBI:57966"/>
    </ligand>
</feature>
<feature type="binding site" evidence="1">
    <location>
        <begin position="147"/>
        <end position="150"/>
    </location>
    <ligand>
        <name>ATP</name>
        <dbReference type="ChEBI" id="CHEBI:30616"/>
    </ligand>
</feature>
<feature type="binding site" evidence="1">
    <location>
        <position position="153"/>
    </location>
    <ligand>
        <name>(R)-pantoate</name>
        <dbReference type="ChEBI" id="CHEBI:15980"/>
    </ligand>
</feature>
<feature type="binding site" evidence="1">
    <location>
        <position position="176"/>
    </location>
    <ligand>
        <name>ATP</name>
        <dbReference type="ChEBI" id="CHEBI:30616"/>
    </ligand>
</feature>
<feature type="binding site" evidence="1">
    <location>
        <begin position="184"/>
        <end position="187"/>
    </location>
    <ligand>
        <name>ATP</name>
        <dbReference type="ChEBI" id="CHEBI:30616"/>
    </ligand>
</feature>
<sequence>MKIINTVQEMQQITNELRASGKSIGFVPTMGYLHEGHATLLRKAREENEIVVLSVFVNPLQFGPNEDLDRYPRDIDRDENVAKENSVDYLFYPSVEEMYPAEQTTTVEVVKRTDVLCGKQRPGHFAGVAIVLMKLFNITLPTRAYFGMKDAQQVAVIEGFVADFNIPVTIVPVDIVREEDGLAKSSRNVYLSPEEREEALHLYRSLCIAKERIETGERNAEIITTLVKEYIETYTKGTVDYADLYAYPSLQVVDKIEGRIILAIAVKFDNVRLIDNITLTVK</sequence>